<name>CH60_SODGM</name>
<proteinExistence type="evidence at protein level"/>
<accession>Q2NW94</accession>
<accession>Q93MH9</accession>
<accession>Q9AMB4</accession>
<accession>Q9ANR8</accession>
<feature type="chain" id="PRO_0000232499" description="Chaperonin GroEL">
    <location>
        <begin position="1"/>
        <end position="548"/>
    </location>
</feature>
<feature type="binding site" evidence="1">
    <location>
        <begin position="30"/>
        <end position="33"/>
    </location>
    <ligand>
        <name>ATP</name>
        <dbReference type="ChEBI" id="CHEBI:30616"/>
    </ligand>
</feature>
<feature type="binding site" evidence="1">
    <location>
        <position position="51"/>
    </location>
    <ligand>
        <name>ATP</name>
        <dbReference type="ChEBI" id="CHEBI:30616"/>
    </ligand>
</feature>
<feature type="binding site" evidence="1">
    <location>
        <begin position="87"/>
        <end position="91"/>
    </location>
    <ligand>
        <name>ATP</name>
        <dbReference type="ChEBI" id="CHEBI:30616"/>
    </ligand>
</feature>
<feature type="binding site" evidence="1">
    <location>
        <position position="415"/>
    </location>
    <ligand>
        <name>ATP</name>
        <dbReference type="ChEBI" id="CHEBI:30616"/>
    </ligand>
</feature>
<feature type="binding site" evidence="1">
    <location>
        <begin position="479"/>
        <end position="481"/>
    </location>
    <ligand>
        <name>ATP</name>
        <dbReference type="ChEBI" id="CHEBI:30616"/>
    </ligand>
</feature>
<feature type="binding site" evidence="1">
    <location>
        <position position="495"/>
    </location>
    <ligand>
        <name>ATP</name>
        <dbReference type="ChEBI" id="CHEBI:30616"/>
    </ligand>
</feature>
<feature type="sequence conflict" description="In Ref. 3; AAK92204." evidence="2" ref="3">
    <original>E</original>
    <variation>D</variation>
    <location>
        <position position="257"/>
    </location>
</feature>
<feature type="sequence conflict" description="In Ref. 1." evidence="2" ref="1">
    <original>GGMM</original>
    <variation>M</variation>
    <location>
        <begin position="545"/>
        <end position="548"/>
    </location>
</feature>
<comment type="function">
    <text evidence="1">Together with its co-chaperonin GroES, plays an essential role in assisting protein folding. The GroEL-GroES system forms a nano-cage that allows encapsulation of the non-native substrate proteins and provides a physical environment optimized to promote and accelerate protein folding.</text>
</comment>
<comment type="catalytic activity">
    <reaction evidence="1">
        <text>ATP + H2O + a folded polypeptide = ADP + phosphate + an unfolded polypeptide.</text>
        <dbReference type="EC" id="5.6.1.7"/>
    </reaction>
</comment>
<comment type="subunit">
    <text evidence="1">Forms a cylinder of 14 subunits composed of two heptameric rings stacked back-to-back. Interacts with the co-chaperonin GroES.</text>
</comment>
<comment type="subcellular location">
    <subcellularLocation>
        <location evidence="1">Cytoplasm</location>
    </subcellularLocation>
</comment>
<comment type="similarity">
    <text evidence="1">Belongs to the chaperonin (HSP60) family.</text>
</comment>
<organism>
    <name type="scientific">Sodalis glossinidius (strain morsitans)</name>
    <dbReference type="NCBI Taxonomy" id="343509"/>
    <lineage>
        <taxon>Bacteria</taxon>
        <taxon>Pseudomonadati</taxon>
        <taxon>Pseudomonadota</taxon>
        <taxon>Gammaproteobacteria</taxon>
        <taxon>Enterobacterales</taxon>
        <taxon>Bruguierivoracaceae</taxon>
        <taxon>Sodalis</taxon>
    </lineage>
</organism>
<dbReference type="EC" id="5.6.1.7" evidence="1"/>
<dbReference type="EMBL" id="AF321517">
    <property type="protein sequence ID" value="AAG49527.1"/>
    <property type="molecule type" value="Genomic_DNA"/>
</dbReference>
<dbReference type="EMBL" id="AP008232">
    <property type="protein sequence ID" value="BAE73581.1"/>
    <property type="molecule type" value="Genomic_DNA"/>
</dbReference>
<dbReference type="EMBL" id="AF404511">
    <property type="protein sequence ID" value="AAK92204.1"/>
    <property type="molecule type" value="Genomic_DNA"/>
</dbReference>
<dbReference type="RefSeq" id="WP_011410169.1">
    <property type="nucleotide sequence ID" value="NC_007712.1"/>
</dbReference>
<dbReference type="SMR" id="Q2NW94"/>
<dbReference type="STRING" id="343509.SG0306"/>
<dbReference type="KEGG" id="sgl:SG0306"/>
<dbReference type="eggNOG" id="COG0459">
    <property type="taxonomic scope" value="Bacteria"/>
</dbReference>
<dbReference type="HOGENOM" id="CLU_016503_3_0_6"/>
<dbReference type="OrthoDB" id="9766614at2"/>
<dbReference type="BioCyc" id="SGLO343509:SGP1_RS02830-MONOMER"/>
<dbReference type="Proteomes" id="UP000001932">
    <property type="component" value="Chromosome"/>
</dbReference>
<dbReference type="GO" id="GO:0005737">
    <property type="term" value="C:cytoplasm"/>
    <property type="evidence" value="ECO:0007669"/>
    <property type="project" value="UniProtKB-SubCell"/>
</dbReference>
<dbReference type="GO" id="GO:0005524">
    <property type="term" value="F:ATP binding"/>
    <property type="evidence" value="ECO:0007669"/>
    <property type="project" value="UniProtKB-UniRule"/>
</dbReference>
<dbReference type="GO" id="GO:0140662">
    <property type="term" value="F:ATP-dependent protein folding chaperone"/>
    <property type="evidence" value="ECO:0007669"/>
    <property type="project" value="InterPro"/>
</dbReference>
<dbReference type="GO" id="GO:0016853">
    <property type="term" value="F:isomerase activity"/>
    <property type="evidence" value="ECO:0007669"/>
    <property type="project" value="UniProtKB-KW"/>
</dbReference>
<dbReference type="GO" id="GO:0051082">
    <property type="term" value="F:unfolded protein binding"/>
    <property type="evidence" value="ECO:0007669"/>
    <property type="project" value="UniProtKB-UniRule"/>
</dbReference>
<dbReference type="GO" id="GO:0042026">
    <property type="term" value="P:protein refolding"/>
    <property type="evidence" value="ECO:0007669"/>
    <property type="project" value="UniProtKB-UniRule"/>
</dbReference>
<dbReference type="CDD" id="cd03344">
    <property type="entry name" value="GroEL"/>
    <property type="match status" value="1"/>
</dbReference>
<dbReference type="FunFam" id="1.10.560.10:FF:000001">
    <property type="entry name" value="60 kDa chaperonin"/>
    <property type="match status" value="1"/>
</dbReference>
<dbReference type="FunFam" id="3.50.7.10:FF:000001">
    <property type="entry name" value="60 kDa chaperonin"/>
    <property type="match status" value="1"/>
</dbReference>
<dbReference type="Gene3D" id="3.50.7.10">
    <property type="entry name" value="GroEL"/>
    <property type="match status" value="1"/>
</dbReference>
<dbReference type="Gene3D" id="1.10.560.10">
    <property type="entry name" value="GroEL-like equatorial domain"/>
    <property type="match status" value="1"/>
</dbReference>
<dbReference type="Gene3D" id="3.30.260.10">
    <property type="entry name" value="TCP-1-like chaperonin intermediate domain"/>
    <property type="match status" value="1"/>
</dbReference>
<dbReference type="HAMAP" id="MF_00600">
    <property type="entry name" value="CH60"/>
    <property type="match status" value="1"/>
</dbReference>
<dbReference type="InterPro" id="IPR018370">
    <property type="entry name" value="Chaperonin_Cpn60_CS"/>
</dbReference>
<dbReference type="InterPro" id="IPR001844">
    <property type="entry name" value="Cpn60/GroEL"/>
</dbReference>
<dbReference type="InterPro" id="IPR002423">
    <property type="entry name" value="Cpn60/GroEL/TCP-1"/>
</dbReference>
<dbReference type="InterPro" id="IPR027409">
    <property type="entry name" value="GroEL-like_apical_dom_sf"/>
</dbReference>
<dbReference type="InterPro" id="IPR027413">
    <property type="entry name" value="GROEL-like_equatorial_sf"/>
</dbReference>
<dbReference type="InterPro" id="IPR027410">
    <property type="entry name" value="TCP-1-like_intermed_sf"/>
</dbReference>
<dbReference type="NCBIfam" id="TIGR02348">
    <property type="entry name" value="GroEL"/>
    <property type="match status" value="1"/>
</dbReference>
<dbReference type="NCBIfam" id="NF000592">
    <property type="entry name" value="PRK00013.1"/>
    <property type="match status" value="1"/>
</dbReference>
<dbReference type="NCBIfam" id="NF009487">
    <property type="entry name" value="PRK12849.1"/>
    <property type="match status" value="1"/>
</dbReference>
<dbReference type="NCBIfam" id="NF009488">
    <property type="entry name" value="PRK12850.1"/>
    <property type="match status" value="1"/>
</dbReference>
<dbReference type="NCBIfam" id="NF009489">
    <property type="entry name" value="PRK12851.1"/>
    <property type="match status" value="1"/>
</dbReference>
<dbReference type="PANTHER" id="PTHR45633">
    <property type="entry name" value="60 KDA HEAT SHOCK PROTEIN, MITOCHONDRIAL"/>
    <property type="match status" value="1"/>
</dbReference>
<dbReference type="Pfam" id="PF00118">
    <property type="entry name" value="Cpn60_TCP1"/>
    <property type="match status" value="1"/>
</dbReference>
<dbReference type="PRINTS" id="PR00298">
    <property type="entry name" value="CHAPERONIN60"/>
</dbReference>
<dbReference type="SUPFAM" id="SSF52029">
    <property type="entry name" value="GroEL apical domain-like"/>
    <property type="match status" value="1"/>
</dbReference>
<dbReference type="SUPFAM" id="SSF48592">
    <property type="entry name" value="GroEL equatorial domain-like"/>
    <property type="match status" value="1"/>
</dbReference>
<dbReference type="SUPFAM" id="SSF54849">
    <property type="entry name" value="GroEL-intermediate domain like"/>
    <property type="match status" value="1"/>
</dbReference>
<dbReference type="PROSITE" id="PS00296">
    <property type="entry name" value="CHAPERONINS_CPN60"/>
    <property type="match status" value="1"/>
</dbReference>
<reference key="1">
    <citation type="journal article" date="2001" name="J. Bacteriol.">
        <title>Genome size determination and coding capacity of Sodalis glossinidius, an enteric symbiont of tsetse flies, as revealed by hybridization to Escherichia coli gene arrays.</title>
        <authorList>
            <person name="Akman L."/>
            <person name="Rio R.V.M."/>
            <person name="Beard C.B."/>
            <person name="Aksoy S."/>
        </authorList>
    </citation>
    <scope>NUCLEOTIDE SEQUENCE [GENOMIC DNA]</scope>
</reference>
<reference key="2">
    <citation type="journal article" date="2006" name="Genome Res.">
        <title>Massive genome erosion and functional adaptations provide insights into the symbiotic lifestyle of Sodalis glossinidius in the tsetse host.</title>
        <authorList>
            <person name="Toh H."/>
            <person name="Weiss B.L."/>
            <person name="Perkin S.A.H."/>
            <person name="Yamashita A."/>
            <person name="Oshima K."/>
            <person name="Hattori M."/>
            <person name="Aksoy S."/>
        </authorList>
    </citation>
    <scope>NUCLEOTIDE SEQUENCE [LARGE SCALE GENOMIC DNA]</scope>
    <source>
        <strain>morsitans</strain>
    </source>
</reference>
<reference key="3">
    <citation type="journal article" date="2002" name="Insect Biochem. Mol. Biol.">
        <title>The major protein in the midgut of teneral Glossina morsitans morsitans is a molecular chaperone from the endosymbiotic bacterium Wigglesworthia glossinidia.</title>
        <authorList>
            <person name="Haines L.R."/>
            <person name="Haddow J.D."/>
            <person name="Aksoy S."/>
            <person name="Gooding R.H."/>
            <person name="Pearson T.W."/>
        </authorList>
    </citation>
    <scope>NUCLEOTIDE SEQUENCE [GENOMIC DNA] OF 1-534</scope>
    <scope>IDENTIFICATION BY MASS SPECTROMETRY</scope>
</reference>
<evidence type="ECO:0000255" key="1">
    <source>
        <dbReference type="HAMAP-Rule" id="MF_00600"/>
    </source>
</evidence>
<evidence type="ECO:0000305" key="2"/>
<protein>
    <recommendedName>
        <fullName evidence="1">Chaperonin GroEL</fullName>
        <ecNumber evidence="1">5.6.1.7</ecNumber>
    </recommendedName>
    <alternativeName>
        <fullName evidence="1">60 kDa chaperonin</fullName>
    </alternativeName>
    <alternativeName>
        <fullName evidence="1">Chaperonin-60</fullName>
        <shortName evidence="1">Cpn60</shortName>
    </alternativeName>
</protein>
<gene>
    <name evidence="1" type="primary">groEL</name>
    <name evidence="1" type="synonym">groL</name>
    <name type="synonym">mopA</name>
    <name type="ordered locus">SG0306</name>
</gene>
<keyword id="KW-0067">ATP-binding</keyword>
<keyword id="KW-0143">Chaperone</keyword>
<keyword id="KW-0963">Cytoplasm</keyword>
<keyword id="KW-0413">Isomerase</keyword>
<keyword id="KW-0547">Nucleotide-binding</keyword>
<sequence length="548" mass="57558">MAAKDVKFGNDARVKMLRGVNVLADAVKVTLGPKGRNVVLDKSFGAPVITKDGVSVAREIELEDKFENMGAQMVKEVASKANDAAGDGTTTATVLAQSIVNEGLKAVAAGMNPMDLKRGIDKAVIAAVEELKKLSVPCSDSKAIAQVGTISANADETVGTLIAEAMAKVGKEGVITVEEGSGLQDELDVVEGMQFDRGYLSPYFVNKPETGAVELESPFILLADKKISNIREMLPVLEAVAKAGKPLLIIAEDVEGEALATLVVNTMRGIVKIAAVKAPGFGDRRKAMLQDIAILTAGTVISEEIGLELEKATLEDMGQAKRVVITKDTTTIIDGEGDKALIDSRVTQINQQRDEATSDYDREKLQERVAKLAGGVAVIKVGAATEVEMKEKKARVEDALHATRAAVEEGVVAGGGVALIRVANRIAELRGDNEDQNVGIKVARRAMEAPLRQIVANAGEEPSVIANKVKAGEGNTGYNAATEEYGNMIDMGILDPTKVTRSALQYAASIAGLMITTECMVTDLPKEDKPDLGGAGGMGGMGGMGGMM</sequence>